<gene>
    <name evidence="5" type="primary">OprA</name>
    <name evidence="9" type="ordered locus">Rv0516c</name>
</gene>
<reference key="1">
    <citation type="journal article" date="1998" name="Nature">
        <title>Deciphering the biology of Mycobacterium tuberculosis from the complete genome sequence.</title>
        <authorList>
            <person name="Cole S.T."/>
            <person name="Brosch R."/>
            <person name="Parkhill J."/>
            <person name="Garnier T."/>
            <person name="Churcher C.M."/>
            <person name="Harris D.E."/>
            <person name="Gordon S.V."/>
            <person name="Eiglmeier K."/>
            <person name="Gas S."/>
            <person name="Barry C.E. III"/>
            <person name="Tekaia F."/>
            <person name="Badcock K."/>
            <person name="Basham D."/>
            <person name="Brown D."/>
            <person name="Chillingworth T."/>
            <person name="Connor R."/>
            <person name="Davies R.M."/>
            <person name="Devlin K."/>
            <person name="Feltwell T."/>
            <person name="Gentles S."/>
            <person name="Hamlin N."/>
            <person name="Holroyd S."/>
            <person name="Hornsby T."/>
            <person name="Jagels K."/>
            <person name="Krogh A."/>
            <person name="McLean J."/>
            <person name="Moule S."/>
            <person name="Murphy L.D."/>
            <person name="Oliver S."/>
            <person name="Osborne J."/>
            <person name="Quail M.A."/>
            <person name="Rajandream M.A."/>
            <person name="Rogers J."/>
            <person name="Rutter S."/>
            <person name="Seeger K."/>
            <person name="Skelton S."/>
            <person name="Squares S."/>
            <person name="Squares R."/>
            <person name="Sulston J.E."/>
            <person name="Taylor K."/>
            <person name="Whitehead S."/>
            <person name="Barrell B.G."/>
        </authorList>
    </citation>
    <scope>NUCLEOTIDE SEQUENCE [LARGE SCALE GENOMIC DNA]</scope>
    <source>
        <strain>ATCC 25618 / H37Rv</strain>
    </source>
</reference>
<reference key="2">
    <citation type="journal article" date="2007" name="PLoS Pathog.">
        <title>M. tuberculosis Ser/Thr protein kinase D phosphorylates an anti-anti-sigma factor homolog.</title>
        <authorList>
            <person name="Greenstein A.E."/>
            <person name="MacGurn J.A."/>
            <person name="Baer C.E."/>
            <person name="Falick A.M."/>
            <person name="Cox J.S."/>
            <person name="Alber T."/>
        </authorList>
    </citation>
    <scope>PHOSPHORYLATION AT THR-2</scope>
    <scope>INTERACTION WITH RV2638</scope>
    <scope>MUTAGENESIS OF THR-2</scope>
</reference>
<reference key="3">
    <citation type="journal article" date="2007" name="Front. Biosci.">
        <title>Stress response of genes encoding putative stress signaling molecules of Mycobacterium tuberculosis.</title>
        <authorList>
            <person name="Dhandayuthapani S."/>
        </authorList>
    </citation>
    <scope>INDUCTION</scope>
</reference>
<reference key="4">
    <citation type="journal article" date="2011" name="Mol. Cell. Proteomics">
        <title>Proteogenomic analysis of Mycobacterium tuberculosis by high resolution mass spectrometry.</title>
        <authorList>
            <person name="Kelkar D.S."/>
            <person name="Kumar D."/>
            <person name="Kumar P."/>
            <person name="Balakrishnan L."/>
            <person name="Muthusamy B."/>
            <person name="Yadav A.K."/>
            <person name="Shrivastava P."/>
            <person name="Marimuthu A."/>
            <person name="Anand S."/>
            <person name="Sundaram H."/>
            <person name="Kingsbury R."/>
            <person name="Harsha H.C."/>
            <person name="Nair B."/>
            <person name="Prasad T.S."/>
            <person name="Chauhan D.S."/>
            <person name="Katoch K."/>
            <person name="Katoch V.M."/>
            <person name="Kumar P."/>
            <person name="Chaerkady R."/>
            <person name="Ramachandran S."/>
            <person name="Dash D."/>
            <person name="Pandey A."/>
        </authorList>
    </citation>
    <scope>IDENTIFICATION BY MASS SPECTROMETRY [LARGE SCALE ANALYSIS]</scope>
    <source>
        <strain>ATCC 25618 / H37Rv</strain>
    </source>
</reference>
<reference key="5">
    <citation type="journal article" date="2013" name="Proc. Natl. Acad. Sci. U.S.A.">
        <title>Osmosensory signaling in Mycobacterium tuberculosis mediated by a eukaryotic-like Ser/Thr protein kinase.</title>
        <authorList>
            <person name="Hatzios S.K."/>
            <person name="Baer C.E."/>
            <person name="Rustad T.R."/>
            <person name="Siegrist M.S."/>
            <person name="Pang J.M."/>
            <person name="Ortega C."/>
            <person name="Alber T."/>
            <person name="Grundner C."/>
            <person name="Sherman D.R."/>
            <person name="Bertozzi C.R."/>
        </authorList>
    </citation>
    <scope>FUNCTION</scope>
    <scope>ACTIVITY REGULATION</scope>
    <scope>INDUCTION</scope>
    <scope>PHOSPHORYLATION</scope>
    <scope>DISRUPTION PHENOTYPE</scope>
    <scope>MUTAGENESIS OF THR-2</scope>
</reference>
<name>OPRA_MYCTU</name>
<sequence length="158" mass="16987">MTTTIPTSKSACSVTTRPGNAAVDYGGAQIRAYLHHLATVVTIRGEIDAANVEQISEHVRRFSLGTNPMVLDLSELSHFSGAGISLLCILDEDCRAAGVQWALVASPAVVEQLGGRCDQGEHESMFPMARSVHKALHDLADAIDRRRQLVLPLISRSA</sequence>
<protein>
    <recommendedName>
        <fullName evidence="5">Osmosensory protein A</fullName>
    </recommendedName>
    <alternativeName>
        <fullName evidence="8">Putative SigF antagonist</fullName>
    </alternativeName>
    <alternativeName>
        <fullName evidence="7">Putative anti-anti-sigma factor Rv0516c</fullName>
    </alternativeName>
</protein>
<keyword id="KW-0597">Phosphoprotein</keyword>
<keyword id="KW-1185">Reference proteome</keyword>
<keyword id="KW-0346">Stress response</keyword>
<proteinExistence type="evidence at protein level"/>
<accession>O33361</accession>
<accession>F2GND1</accession>
<accession>I6XVH4</accession>
<accession>L0T6Q7</accession>
<evidence type="ECO:0000255" key="1">
    <source>
        <dbReference type="PROSITE-ProRule" id="PRU00198"/>
    </source>
</evidence>
<evidence type="ECO:0000269" key="2">
    <source>
    </source>
</evidence>
<evidence type="ECO:0000269" key="3">
    <source>
    </source>
</evidence>
<evidence type="ECO:0000269" key="4">
    <source>
    </source>
</evidence>
<evidence type="ECO:0000303" key="5">
    <source>
    </source>
</evidence>
<evidence type="ECO:0000305" key="6"/>
<evidence type="ECO:0000305" key="7">
    <source>
    </source>
</evidence>
<evidence type="ECO:0000305" key="8">
    <source>
    </source>
</evidence>
<evidence type="ECO:0000312" key="9">
    <source>
        <dbReference type="EMBL" id="CCP43253.1"/>
    </source>
</evidence>
<organism>
    <name type="scientific">Mycobacterium tuberculosis (strain ATCC 25618 / H37Rv)</name>
    <dbReference type="NCBI Taxonomy" id="83332"/>
    <lineage>
        <taxon>Bacteria</taxon>
        <taxon>Bacillati</taxon>
        <taxon>Actinomycetota</taxon>
        <taxon>Actinomycetes</taxon>
        <taxon>Mycobacteriales</taxon>
        <taxon>Mycobacteriaceae</taxon>
        <taxon>Mycobacterium</taxon>
        <taxon>Mycobacterium tuberculosis complex</taxon>
    </lineage>
</organism>
<dbReference type="EMBL" id="AL123456">
    <property type="protein sequence ID" value="CCP43253.1"/>
    <property type="molecule type" value="Genomic_DNA"/>
</dbReference>
<dbReference type="RefSeq" id="NP_215030.1">
    <property type="nucleotide sequence ID" value="NC_000962.3"/>
</dbReference>
<dbReference type="RefSeq" id="WP_003402807.1">
    <property type="nucleotide sequence ID" value="NZ_NVQJ01000068.1"/>
</dbReference>
<dbReference type="SMR" id="O33361"/>
<dbReference type="IntAct" id="O33361">
    <property type="interactions" value="2"/>
</dbReference>
<dbReference type="STRING" id="83332.Rv0516c"/>
<dbReference type="iPTMnet" id="O33361"/>
<dbReference type="PaxDb" id="83332-Rv0516c"/>
<dbReference type="GeneID" id="45424480"/>
<dbReference type="GeneID" id="887324"/>
<dbReference type="KEGG" id="mtu:Rv0516c"/>
<dbReference type="KEGG" id="mtv:RVBD_0516c"/>
<dbReference type="PATRIC" id="fig|83332.111.peg.568"/>
<dbReference type="TubercuList" id="Rv0516c"/>
<dbReference type="eggNOG" id="COG1366">
    <property type="taxonomic scope" value="Bacteria"/>
</dbReference>
<dbReference type="InParanoid" id="O33361"/>
<dbReference type="OrthoDB" id="4735650at2"/>
<dbReference type="Proteomes" id="UP000001584">
    <property type="component" value="Chromosome"/>
</dbReference>
<dbReference type="CDD" id="cd07043">
    <property type="entry name" value="STAS_anti-anti-sigma_factors"/>
    <property type="match status" value="1"/>
</dbReference>
<dbReference type="Gene3D" id="3.30.750.24">
    <property type="entry name" value="STAS domain"/>
    <property type="match status" value="1"/>
</dbReference>
<dbReference type="InterPro" id="IPR002645">
    <property type="entry name" value="STAS_dom"/>
</dbReference>
<dbReference type="InterPro" id="IPR036513">
    <property type="entry name" value="STAS_dom_sf"/>
</dbReference>
<dbReference type="Pfam" id="PF01740">
    <property type="entry name" value="STAS"/>
    <property type="match status" value="1"/>
</dbReference>
<dbReference type="SUPFAM" id="SSF52091">
    <property type="entry name" value="SpoIIaa-like"/>
    <property type="match status" value="1"/>
</dbReference>
<dbReference type="PROSITE" id="PS50801">
    <property type="entry name" value="STAS"/>
    <property type="match status" value="1"/>
</dbReference>
<comment type="function">
    <text evidence="2 4">Part of a signaling pathway that enables adaptation to osmotic stress through cell wall remodeling and virulence factor production (PubMed:24309377). Unphosphorylated OprA forms a complex with the anti-anti-sigma-factor paralog Rv2638 that dissociates on OprA phosphorylation by PknD (PubMed:17411339). Phosphorylation of OprA may stimulate the release of SigF from an inhibitory complex and enable the transcription of osmotically regulated genes, such as oprA and the ESX-1-associated virulence factor espA (PubMed:24309377).</text>
</comment>
<comment type="activity regulation">
    <text evidence="4">Regulated by PknD under osmotic stress.</text>
</comment>
<comment type="subunit">
    <text evidence="2">Interacts with Rv2638. Phosphorylation abolishes binding to Rv2638.</text>
</comment>
<comment type="induction">
    <text evidence="3 4">Highly up-regulated by osmotic stress (PubMed:17485404, PubMed:24309377). Also induced during oxidative and starvation stresses (PubMed:17485404).</text>
</comment>
<comment type="PTM">
    <text evidence="2 4">Phosphorylated on Thr-2 by the serine/threonine-protein kinase PknD (PubMed:17411339, PubMed:24309377). Also phosphorylated to a lesser extent by PknB and PknE (PubMed:17411339). Dephosphorylated by PstP (PubMed:17411339).</text>
</comment>
<comment type="disruption phenotype">
    <text evidence="4">Disruption of the gene enhances resistance to osmotic stress, increases resistance to several peptidoglycan biosynthesis inhibitors, decreases peptidoglycan thickness, enhances antibiotic resistance and activates genes in the SigF regulon.</text>
</comment>
<comment type="similarity">
    <text evidence="6">Belongs to the anti-sigma-factor antagonist family.</text>
</comment>
<feature type="chain" id="PRO_0000451030" description="Osmosensory protein A">
    <location>
        <begin position="1"/>
        <end position="158"/>
    </location>
</feature>
<feature type="domain" description="STAS" evidence="1">
    <location>
        <begin position="28"/>
        <end position="139"/>
    </location>
</feature>
<feature type="modified residue" description="Phosphothreonine; by PknD" evidence="2">
    <location>
        <position position="2"/>
    </location>
</feature>
<feature type="mutagenesis site" description="Lack of phosphorylation by PknD. Reduced oprA induction in response to osmotic stress." evidence="2 4">
    <original>T</original>
    <variation>A</variation>
    <location>
        <position position="2"/>
    </location>
</feature>